<organism>
    <name type="scientific">Drosophila melanogaster</name>
    <name type="common">Fruit fly</name>
    <dbReference type="NCBI Taxonomy" id="7227"/>
    <lineage>
        <taxon>Eukaryota</taxon>
        <taxon>Metazoa</taxon>
        <taxon>Ecdysozoa</taxon>
        <taxon>Arthropoda</taxon>
        <taxon>Hexapoda</taxon>
        <taxon>Insecta</taxon>
        <taxon>Pterygota</taxon>
        <taxon>Neoptera</taxon>
        <taxon>Endopterygota</taxon>
        <taxon>Diptera</taxon>
        <taxon>Brachycera</taxon>
        <taxon>Muscomorpha</taxon>
        <taxon>Ephydroidea</taxon>
        <taxon>Drosophilidae</taxon>
        <taxon>Drosophila</taxon>
        <taxon>Sophophora</taxon>
    </lineage>
</organism>
<keyword id="KW-0067">ATP-binding</keyword>
<keyword id="KW-0375">Hydrogen ion transport</keyword>
<keyword id="KW-0406">Ion transport</keyword>
<keyword id="KW-0547">Nucleotide-binding</keyword>
<keyword id="KW-1185">Reference proteome</keyword>
<keyword id="KW-0813">Transport</keyword>
<protein>
    <recommendedName>
        <fullName>V-type proton ATPase subunit B</fullName>
        <shortName>V-ATPase subunit B</shortName>
    </recommendedName>
    <alternativeName>
        <fullName>V-ATPase 55 kDa subunit</fullName>
    </alternativeName>
    <alternativeName>
        <fullName>Vacuolar proton pump subunit B</fullName>
    </alternativeName>
</protein>
<name>VATB_DROME</name>
<proteinExistence type="evidence at transcript level"/>
<gene>
    <name type="primary">Vha55</name>
    <name type="ORF">CG17369</name>
</gene>
<accession>P31409</accession>
<accession>Q53YH8</accession>
<accession>Q9VG52</accession>
<sequence length="490" mass="54549">MNAQQAQREHVLAVSRDFISQPRLTYKTVSGVNGPLVILDEVKFPKFAEIVQLRLADGTVRSGQVLEVSGSKAVVQVFEGTSGIDAKNTLCEFTGDILRTPVSEDMLGRVFNGSGKPIDKGPPILAEDFLDIQGQPINPWSRIYPEEMIQTGISAIDVMNSIARGQKIPIFSAAGLPHNEIAAQICRQAGLVKLPGKSVLDDHTDNFAIVFAAMGVNMETARFFKQDFEENGSMENVCLFLNLANDPTIERIITPRLALTAAEFLAYQCEKHVLVILTDMSSYAEALREVSAAREEVPGRRGFPGYMYTDLATIYERAGRVEGRNGSITQIPILTMPNDDITHPIPDLTGYITEGQIYVDRQLHNRQIYPPVNVLPSLSRLMKSAIGEGMTRKDHSDVSNQLYACYAIGKDVQAMKAVVGEEALTPDDLLYLEFLTKFEKNFISQGNYENRTVFESLDIGWQLLRIFPKEMLKRIPASILAEFYPRDSRH</sequence>
<reference key="1">
    <citation type="journal article" date="1996" name="J. Biol. Chem.">
        <title>Analysis and inactivation of vha55, the gene encoding the vacuolar ATPase B-subunit in Drosophila melanogaster reveals a larval lethal phenotype.</title>
        <authorList>
            <person name="Davies S.A."/>
            <person name="Kelly D.C."/>
            <person name="Goodwin S.F."/>
            <person name="Yang S."/>
            <person name="Sozen M.A."/>
            <person name="Kaiser K."/>
            <person name="Dow J.A.T."/>
        </authorList>
    </citation>
    <scope>NUCLEOTIDE SEQUENCE [MRNA]</scope>
    <scope>TISSUE SPECIFICITY</scope>
    <source>
        <strain>EYA</strain>
        <tissue>Head</tissue>
    </source>
</reference>
<reference key="2">
    <citation type="journal article" date="2000" name="Science">
        <title>The genome sequence of Drosophila melanogaster.</title>
        <authorList>
            <person name="Adams M.D."/>
            <person name="Celniker S.E."/>
            <person name="Holt R.A."/>
            <person name="Evans C.A."/>
            <person name="Gocayne J.D."/>
            <person name="Amanatides P.G."/>
            <person name="Scherer S.E."/>
            <person name="Li P.W."/>
            <person name="Hoskins R.A."/>
            <person name="Galle R.F."/>
            <person name="George R.A."/>
            <person name="Lewis S.E."/>
            <person name="Richards S."/>
            <person name="Ashburner M."/>
            <person name="Henderson S.N."/>
            <person name="Sutton G.G."/>
            <person name="Wortman J.R."/>
            <person name="Yandell M.D."/>
            <person name="Zhang Q."/>
            <person name="Chen L.X."/>
            <person name="Brandon R.C."/>
            <person name="Rogers Y.-H.C."/>
            <person name="Blazej R.G."/>
            <person name="Champe M."/>
            <person name="Pfeiffer B.D."/>
            <person name="Wan K.H."/>
            <person name="Doyle C."/>
            <person name="Baxter E.G."/>
            <person name="Helt G."/>
            <person name="Nelson C.R."/>
            <person name="Miklos G.L.G."/>
            <person name="Abril J.F."/>
            <person name="Agbayani A."/>
            <person name="An H.-J."/>
            <person name="Andrews-Pfannkoch C."/>
            <person name="Baldwin D."/>
            <person name="Ballew R.M."/>
            <person name="Basu A."/>
            <person name="Baxendale J."/>
            <person name="Bayraktaroglu L."/>
            <person name="Beasley E.M."/>
            <person name="Beeson K.Y."/>
            <person name="Benos P.V."/>
            <person name="Berman B.P."/>
            <person name="Bhandari D."/>
            <person name="Bolshakov S."/>
            <person name="Borkova D."/>
            <person name="Botchan M.R."/>
            <person name="Bouck J."/>
            <person name="Brokstein P."/>
            <person name="Brottier P."/>
            <person name="Burtis K.C."/>
            <person name="Busam D.A."/>
            <person name="Butler H."/>
            <person name="Cadieu E."/>
            <person name="Center A."/>
            <person name="Chandra I."/>
            <person name="Cherry J.M."/>
            <person name="Cawley S."/>
            <person name="Dahlke C."/>
            <person name="Davenport L.B."/>
            <person name="Davies P."/>
            <person name="de Pablos B."/>
            <person name="Delcher A."/>
            <person name="Deng Z."/>
            <person name="Mays A.D."/>
            <person name="Dew I."/>
            <person name="Dietz S.M."/>
            <person name="Dodson K."/>
            <person name="Doup L.E."/>
            <person name="Downes M."/>
            <person name="Dugan-Rocha S."/>
            <person name="Dunkov B.C."/>
            <person name="Dunn P."/>
            <person name="Durbin K.J."/>
            <person name="Evangelista C.C."/>
            <person name="Ferraz C."/>
            <person name="Ferriera S."/>
            <person name="Fleischmann W."/>
            <person name="Fosler C."/>
            <person name="Gabrielian A.E."/>
            <person name="Garg N.S."/>
            <person name="Gelbart W.M."/>
            <person name="Glasser K."/>
            <person name="Glodek A."/>
            <person name="Gong F."/>
            <person name="Gorrell J.H."/>
            <person name="Gu Z."/>
            <person name="Guan P."/>
            <person name="Harris M."/>
            <person name="Harris N.L."/>
            <person name="Harvey D.A."/>
            <person name="Heiman T.J."/>
            <person name="Hernandez J.R."/>
            <person name="Houck J."/>
            <person name="Hostin D."/>
            <person name="Houston K.A."/>
            <person name="Howland T.J."/>
            <person name="Wei M.-H."/>
            <person name="Ibegwam C."/>
            <person name="Jalali M."/>
            <person name="Kalush F."/>
            <person name="Karpen G.H."/>
            <person name="Ke Z."/>
            <person name="Kennison J.A."/>
            <person name="Ketchum K.A."/>
            <person name="Kimmel B.E."/>
            <person name="Kodira C.D."/>
            <person name="Kraft C.L."/>
            <person name="Kravitz S."/>
            <person name="Kulp D."/>
            <person name="Lai Z."/>
            <person name="Lasko P."/>
            <person name="Lei Y."/>
            <person name="Levitsky A.A."/>
            <person name="Li J.H."/>
            <person name="Li Z."/>
            <person name="Liang Y."/>
            <person name="Lin X."/>
            <person name="Liu X."/>
            <person name="Mattei B."/>
            <person name="McIntosh T.C."/>
            <person name="McLeod M.P."/>
            <person name="McPherson D."/>
            <person name="Merkulov G."/>
            <person name="Milshina N.V."/>
            <person name="Mobarry C."/>
            <person name="Morris J."/>
            <person name="Moshrefi A."/>
            <person name="Mount S.M."/>
            <person name="Moy M."/>
            <person name="Murphy B."/>
            <person name="Murphy L."/>
            <person name="Muzny D.M."/>
            <person name="Nelson D.L."/>
            <person name="Nelson D.R."/>
            <person name="Nelson K.A."/>
            <person name="Nixon K."/>
            <person name="Nusskern D.R."/>
            <person name="Pacleb J.M."/>
            <person name="Palazzolo M."/>
            <person name="Pittman G.S."/>
            <person name="Pan S."/>
            <person name="Pollard J."/>
            <person name="Puri V."/>
            <person name="Reese M.G."/>
            <person name="Reinert K."/>
            <person name="Remington K."/>
            <person name="Saunders R.D.C."/>
            <person name="Scheeler F."/>
            <person name="Shen H."/>
            <person name="Shue B.C."/>
            <person name="Siden-Kiamos I."/>
            <person name="Simpson M."/>
            <person name="Skupski M.P."/>
            <person name="Smith T.J."/>
            <person name="Spier E."/>
            <person name="Spradling A.C."/>
            <person name="Stapleton M."/>
            <person name="Strong R."/>
            <person name="Sun E."/>
            <person name="Svirskas R."/>
            <person name="Tector C."/>
            <person name="Turner R."/>
            <person name="Venter E."/>
            <person name="Wang A.H."/>
            <person name="Wang X."/>
            <person name="Wang Z.-Y."/>
            <person name="Wassarman D.A."/>
            <person name="Weinstock G.M."/>
            <person name="Weissenbach J."/>
            <person name="Williams S.M."/>
            <person name="Woodage T."/>
            <person name="Worley K.C."/>
            <person name="Wu D."/>
            <person name="Yang S."/>
            <person name="Yao Q.A."/>
            <person name="Ye J."/>
            <person name="Yeh R.-F."/>
            <person name="Zaveri J.S."/>
            <person name="Zhan M."/>
            <person name="Zhang G."/>
            <person name="Zhao Q."/>
            <person name="Zheng L."/>
            <person name="Zheng X.H."/>
            <person name="Zhong F.N."/>
            <person name="Zhong W."/>
            <person name="Zhou X."/>
            <person name="Zhu S.C."/>
            <person name="Zhu X."/>
            <person name="Smith H.O."/>
            <person name="Gibbs R.A."/>
            <person name="Myers E.W."/>
            <person name="Rubin G.M."/>
            <person name="Venter J.C."/>
        </authorList>
    </citation>
    <scope>NUCLEOTIDE SEQUENCE [LARGE SCALE GENOMIC DNA]</scope>
    <source>
        <strain>Berkeley</strain>
    </source>
</reference>
<reference key="3">
    <citation type="journal article" date="2002" name="Genome Biol.">
        <title>Annotation of the Drosophila melanogaster euchromatic genome: a systematic review.</title>
        <authorList>
            <person name="Misra S."/>
            <person name="Crosby M.A."/>
            <person name="Mungall C.J."/>
            <person name="Matthews B.B."/>
            <person name="Campbell K.S."/>
            <person name="Hradecky P."/>
            <person name="Huang Y."/>
            <person name="Kaminker J.S."/>
            <person name="Millburn G.H."/>
            <person name="Prochnik S.E."/>
            <person name="Smith C.D."/>
            <person name="Tupy J.L."/>
            <person name="Whitfield E.J."/>
            <person name="Bayraktaroglu L."/>
            <person name="Berman B.P."/>
            <person name="Bettencourt B.R."/>
            <person name="Celniker S.E."/>
            <person name="de Grey A.D.N.J."/>
            <person name="Drysdale R.A."/>
            <person name="Harris N.L."/>
            <person name="Richter J."/>
            <person name="Russo S."/>
            <person name="Schroeder A.J."/>
            <person name="Shu S.Q."/>
            <person name="Stapleton M."/>
            <person name="Yamada C."/>
            <person name="Ashburner M."/>
            <person name="Gelbart W.M."/>
            <person name="Rubin G.M."/>
            <person name="Lewis S.E."/>
        </authorList>
    </citation>
    <scope>GENOME REANNOTATION</scope>
    <source>
        <strain>Berkeley</strain>
    </source>
</reference>
<reference key="4">
    <citation type="journal article" date="2002" name="Genome Biol.">
        <title>A Drosophila full-length cDNA resource.</title>
        <authorList>
            <person name="Stapleton M."/>
            <person name="Carlson J.W."/>
            <person name="Brokstein P."/>
            <person name="Yu C."/>
            <person name="Champe M."/>
            <person name="George R.A."/>
            <person name="Guarin H."/>
            <person name="Kronmiller B."/>
            <person name="Pacleb J.M."/>
            <person name="Park S."/>
            <person name="Wan K.H."/>
            <person name="Rubin G.M."/>
            <person name="Celniker S.E."/>
        </authorList>
    </citation>
    <scope>NUCLEOTIDE SEQUENCE [LARGE SCALE MRNA]</scope>
    <source>
        <strain>Berkeley</strain>
        <tissue>Head</tissue>
    </source>
</reference>
<reference key="5">
    <citation type="journal article" date="2010" name="Curr. Biol.">
        <title>Regulation of Frizzled-dependent planar polarity signaling by a V-ATPase subunit.</title>
        <authorList>
            <person name="Hermle T."/>
            <person name="Saltukoglu D."/>
            <person name="Gruenewald J."/>
            <person name="Walz G."/>
            <person name="Simons M."/>
        </authorList>
    </citation>
    <scope>DISRUPTION PHENOTYPE</scope>
</reference>
<dbReference type="EMBL" id="X67839">
    <property type="protein sequence ID" value="CAA48034.1"/>
    <property type="molecule type" value="mRNA"/>
</dbReference>
<dbReference type="EMBL" id="AE014297">
    <property type="protein sequence ID" value="AAF54836.1"/>
    <property type="molecule type" value="Genomic_DNA"/>
</dbReference>
<dbReference type="EMBL" id="AY051623">
    <property type="protein sequence ID" value="AAK93047.1"/>
    <property type="molecule type" value="mRNA"/>
</dbReference>
<dbReference type="EMBL" id="BT001302">
    <property type="protein sequence ID" value="AAN71057.1"/>
    <property type="molecule type" value="mRNA"/>
</dbReference>
<dbReference type="PIR" id="S25167">
    <property type="entry name" value="S25167"/>
</dbReference>
<dbReference type="RefSeq" id="NP_001163597.1">
    <property type="nucleotide sequence ID" value="NM_001170126.1"/>
</dbReference>
<dbReference type="RefSeq" id="NP_476908.1">
    <property type="nucleotide sequence ID" value="NM_057560.4"/>
</dbReference>
<dbReference type="RefSeq" id="NP_731726.1">
    <property type="nucleotide sequence ID" value="NM_169475.2"/>
</dbReference>
<dbReference type="SMR" id="P31409"/>
<dbReference type="BioGRID" id="66645">
    <property type="interactions" value="30"/>
</dbReference>
<dbReference type="DIP" id="DIP-17495N"/>
<dbReference type="FunCoup" id="P31409">
    <property type="interactions" value="1818"/>
</dbReference>
<dbReference type="IntAct" id="P31409">
    <property type="interactions" value="270"/>
</dbReference>
<dbReference type="STRING" id="7227.FBpp0082139"/>
<dbReference type="PaxDb" id="7227-FBpp0082139"/>
<dbReference type="DNASU" id="41550"/>
<dbReference type="EnsemblMetazoa" id="FBtr0082670">
    <property type="protein sequence ID" value="FBpp0082139"/>
    <property type="gene ID" value="FBgn0005671"/>
</dbReference>
<dbReference type="EnsemblMetazoa" id="FBtr0082671">
    <property type="protein sequence ID" value="FBpp0082140"/>
    <property type="gene ID" value="FBgn0005671"/>
</dbReference>
<dbReference type="EnsemblMetazoa" id="FBtr0301661">
    <property type="protein sequence ID" value="FBpp0290875"/>
    <property type="gene ID" value="FBgn0005671"/>
</dbReference>
<dbReference type="GeneID" id="41550"/>
<dbReference type="KEGG" id="dme:Dmel_CG17369"/>
<dbReference type="AGR" id="FB:FBgn0005671"/>
<dbReference type="CTD" id="41550"/>
<dbReference type="FlyBase" id="FBgn0005671">
    <property type="gene designation" value="Vha55"/>
</dbReference>
<dbReference type="VEuPathDB" id="VectorBase:FBgn0005671"/>
<dbReference type="eggNOG" id="KOG1351">
    <property type="taxonomic scope" value="Eukaryota"/>
</dbReference>
<dbReference type="GeneTree" id="ENSGT00940000155068"/>
<dbReference type="HOGENOM" id="CLU_022916_3_0_1"/>
<dbReference type="InParanoid" id="P31409"/>
<dbReference type="OMA" id="EDHPQVM"/>
<dbReference type="OrthoDB" id="1735853at2759"/>
<dbReference type="PhylomeDB" id="P31409"/>
<dbReference type="Reactome" id="R-DME-1222556">
    <property type="pathway name" value="ROS and RNS production in phagocytes"/>
</dbReference>
<dbReference type="Reactome" id="R-DME-77387">
    <property type="pathway name" value="Insulin receptor recycling"/>
</dbReference>
<dbReference type="Reactome" id="R-DME-917977">
    <property type="pathway name" value="Transferrin endocytosis and recycling"/>
</dbReference>
<dbReference type="Reactome" id="R-DME-9639288">
    <property type="pathway name" value="Amino acids regulate mTORC1"/>
</dbReference>
<dbReference type="Reactome" id="R-DME-983712">
    <property type="pathway name" value="Ion channel transport"/>
</dbReference>
<dbReference type="SignaLink" id="P31409"/>
<dbReference type="BioGRID-ORCS" id="41550">
    <property type="hits" value="1 hit in 3 CRISPR screens"/>
</dbReference>
<dbReference type="ChiTaRS" id="Vha55">
    <property type="organism name" value="fly"/>
</dbReference>
<dbReference type="GenomeRNAi" id="41550"/>
<dbReference type="PRO" id="PR:P31409"/>
<dbReference type="Proteomes" id="UP000000803">
    <property type="component" value="Chromosome 3R"/>
</dbReference>
<dbReference type="Bgee" id="FBgn0005671">
    <property type="expression patterns" value="Expressed in adult Malpighian tubule (Drosophila) and 291 other cell types or tissues"/>
</dbReference>
<dbReference type="ExpressionAtlas" id="P31409">
    <property type="expression patterns" value="baseline and differential"/>
</dbReference>
<dbReference type="GO" id="GO:0005903">
    <property type="term" value="C:brush border"/>
    <property type="evidence" value="ECO:0000314"/>
    <property type="project" value="FlyBase"/>
</dbReference>
<dbReference type="GO" id="GO:0005829">
    <property type="term" value="C:cytosol"/>
    <property type="evidence" value="ECO:0007005"/>
    <property type="project" value="FlyBase"/>
</dbReference>
<dbReference type="GO" id="GO:0005769">
    <property type="term" value="C:early endosome"/>
    <property type="evidence" value="ECO:0000314"/>
    <property type="project" value="FlyBase"/>
</dbReference>
<dbReference type="GO" id="GO:0048471">
    <property type="term" value="C:perinuclear region of cytoplasm"/>
    <property type="evidence" value="ECO:0000314"/>
    <property type="project" value="FlyBase"/>
</dbReference>
<dbReference type="GO" id="GO:0005886">
    <property type="term" value="C:plasma membrane"/>
    <property type="evidence" value="ECO:0007005"/>
    <property type="project" value="FlyBase"/>
</dbReference>
<dbReference type="GO" id="GO:0033181">
    <property type="term" value="C:plasma membrane proton-transporting V-type ATPase complex"/>
    <property type="evidence" value="ECO:0000315"/>
    <property type="project" value="FlyBase"/>
</dbReference>
<dbReference type="GO" id="GO:0000221">
    <property type="term" value="C:vacuolar proton-transporting V-type ATPase, V1 domain"/>
    <property type="evidence" value="ECO:0000250"/>
    <property type="project" value="FlyBase"/>
</dbReference>
<dbReference type="GO" id="GO:0005524">
    <property type="term" value="F:ATP binding"/>
    <property type="evidence" value="ECO:0007669"/>
    <property type="project" value="UniProtKB-KW"/>
</dbReference>
<dbReference type="GO" id="GO:0046961">
    <property type="term" value="F:proton-transporting ATPase activity, rotational mechanism"/>
    <property type="evidence" value="ECO:0007669"/>
    <property type="project" value="InterPro"/>
</dbReference>
<dbReference type="GO" id="GO:0046034">
    <property type="term" value="P:ATP metabolic process"/>
    <property type="evidence" value="ECO:0007669"/>
    <property type="project" value="InterPro"/>
</dbReference>
<dbReference type="GO" id="GO:1902600">
    <property type="term" value="P:proton transmembrane transport"/>
    <property type="evidence" value="ECO:0000316"/>
    <property type="project" value="FlyBase"/>
</dbReference>
<dbReference type="GO" id="GO:0007035">
    <property type="term" value="P:vacuolar acidification"/>
    <property type="evidence" value="ECO:0000314"/>
    <property type="project" value="FlyBase"/>
</dbReference>
<dbReference type="CDD" id="cd18112">
    <property type="entry name" value="ATP-synt_V_A-type_beta_C"/>
    <property type="match status" value="1"/>
</dbReference>
<dbReference type="CDD" id="cd18118">
    <property type="entry name" value="ATP-synt_V_A-type_beta_N"/>
    <property type="match status" value="1"/>
</dbReference>
<dbReference type="CDD" id="cd01135">
    <property type="entry name" value="V_A-ATPase_B"/>
    <property type="match status" value="1"/>
</dbReference>
<dbReference type="FunFam" id="3.40.50.12240:FF:000001">
    <property type="entry name" value="V-type proton ATPase subunit B, brain"/>
    <property type="match status" value="1"/>
</dbReference>
<dbReference type="Gene3D" id="3.40.50.12240">
    <property type="match status" value="1"/>
</dbReference>
<dbReference type="HAMAP" id="MF_00310">
    <property type="entry name" value="ATP_synth_B_arch"/>
    <property type="match status" value="1"/>
</dbReference>
<dbReference type="InterPro" id="IPR055190">
    <property type="entry name" value="ATP-synt_VA_C"/>
</dbReference>
<dbReference type="InterPro" id="IPR020003">
    <property type="entry name" value="ATPase_a/bsu_AS"/>
</dbReference>
<dbReference type="InterPro" id="IPR004100">
    <property type="entry name" value="ATPase_F1/V1/A1_a/bsu_N"/>
</dbReference>
<dbReference type="InterPro" id="IPR000194">
    <property type="entry name" value="ATPase_F1/V1/A1_a/bsu_nucl-bd"/>
</dbReference>
<dbReference type="InterPro" id="IPR005723">
    <property type="entry name" value="ATPase_V1-cplx_bsu"/>
</dbReference>
<dbReference type="InterPro" id="IPR027417">
    <property type="entry name" value="P-loop_NTPase"/>
</dbReference>
<dbReference type="InterPro" id="IPR022879">
    <property type="entry name" value="V-ATPase_su_B/beta"/>
</dbReference>
<dbReference type="NCBIfam" id="NF003235">
    <property type="entry name" value="PRK04196.1"/>
    <property type="match status" value="1"/>
</dbReference>
<dbReference type="NCBIfam" id="TIGR01040">
    <property type="entry name" value="V-ATPase_V1_B"/>
    <property type="match status" value="1"/>
</dbReference>
<dbReference type="PANTHER" id="PTHR43389">
    <property type="entry name" value="V-TYPE PROTON ATPASE SUBUNIT B"/>
    <property type="match status" value="1"/>
</dbReference>
<dbReference type="PANTHER" id="PTHR43389:SF4">
    <property type="entry name" value="V-TYPE PROTON ATPASE SUBUNIT B"/>
    <property type="match status" value="1"/>
</dbReference>
<dbReference type="Pfam" id="PF00006">
    <property type="entry name" value="ATP-synt_ab"/>
    <property type="match status" value="1"/>
</dbReference>
<dbReference type="Pfam" id="PF02874">
    <property type="entry name" value="ATP-synt_ab_N"/>
    <property type="match status" value="1"/>
</dbReference>
<dbReference type="Pfam" id="PF22919">
    <property type="entry name" value="ATP-synt_VA_C"/>
    <property type="match status" value="1"/>
</dbReference>
<dbReference type="PIRSF" id="PIRSF039114">
    <property type="entry name" value="V-ATPsynth_beta/V-ATPase_B"/>
    <property type="match status" value="1"/>
</dbReference>
<dbReference type="SUPFAM" id="SSF52540">
    <property type="entry name" value="P-loop containing nucleoside triphosphate hydrolases"/>
    <property type="match status" value="1"/>
</dbReference>
<dbReference type="PROSITE" id="PS00152">
    <property type="entry name" value="ATPASE_ALPHA_BETA"/>
    <property type="match status" value="1"/>
</dbReference>
<comment type="function">
    <text evidence="1">Non-catalytic subunit of the V1 complex of vacuolar(H+)-ATPase (V-ATPase), a multisubunit enzyme composed of a peripheral complex (V1) that hydrolyzes ATP and a membrane integral complex (V0) that translocates protons (By similarity). V-ATPase is responsible for acidifying and maintaining the pH of intracellular compartments and in some cell types, is targeted to the plasma membrane, where it is responsible for acidifying the extracellular environment (By similarity). Essential for the proper assembly and activity of V-ATPase (By similarity).</text>
</comment>
<comment type="subunit">
    <text evidence="2">V-ATPase is a heteromultimeric enzyme made up of two complexes: the ATP-hydrolytic V1 complex and the proton translocation V0 complex (By similarity). The V1 complex consists of three catalytic AB heterodimers that form a heterohexamer, three peripheral stalks each consisting of EG heterodimers, one central rotor including subunits D and F, and the regulatory subunits C and H (By similarity). The proton translocation complex V0 consists of the proton transport subunit a, a ring of proteolipid subunits c9c'', rotary subunit d, subunits e and f, and the accessory subunits VhaAC45 and ATP6AP2 (By similarity).</text>
</comment>
<comment type="tissue specificity">
    <text evidence="4">Expressed in Malpighian tubules, rectum, antennal palps and oviduct.</text>
</comment>
<comment type="disruption phenotype">
    <text evidence="3">RNAi-mediated knockdown in the wing results in planar cell polarity (PCP) defects including misorientation of hairs, multiple wing hairs and defective venation.</text>
</comment>
<comment type="similarity">
    <text evidence="5">Belongs to the ATPase alpha/beta chains family.</text>
</comment>
<evidence type="ECO:0000250" key="1">
    <source>
        <dbReference type="UniProtKB" id="P15313"/>
    </source>
</evidence>
<evidence type="ECO:0000250" key="2">
    <source>
        <dbReference type="UniProtKB" id="P21281"/>
    </source>
</evidence>
<evidence type="ECO:0000269" key="3">
    <source>
    </source>
</evidence>
<evidence type="ECO:0000269" key="4">
    <source>
    </source>
</evidence>
<evidence type="ECO:0000305" key="5"/>
<feature type="chain" id="PRO_0000144632" description="V-type proton ATPase subunit B">
    <location>
        <begin position="1"/>
        <end position="490"/>
    </location>
</feature>
<feature type="binding site" evidence="2">
    <location>
        <position position="380"/>
    </location>
    <ligand>
        <name>ATP</name>
        <dbReference type="ChEBI" id="CHEBI:30616"/>
    </ligand>
</feature>